<dbReference type="EC" id="2.4.1.227" evidence="1"/>
<dbReference type="EMBL" id="CP000569">
    <property type="protein sequence ID" value="ABN73126.1"/>
    <property type="molecule type" value="Genomic_DNA"/>
</dbReference>
<dbReference type="RefSeq" id="WP_011848301.1">
    <property type="nucleotide sequence ID" value="NC_009053.1"/>
</dbReference>
<dbReference type="SMR" id="A3MY90"/>
<dbReference type="STRING" id="416269.APL_0018"/>
<dbReference type="CAZy" id="GT28">
    <property type="family name" value="Glycosyltransferase Family 28"/>
</dbReference>
<dbReference type="EnsemblBacteria" id="ABN73126">
    <property type="protein sequence ID" value="ABN73126"/>
    <property type="gene ID" value="APL_0018"/>
</dbReference>
<dbReference type="KEGG" id="apl:APL_0018"/>
<dbReference type="PATRIC" id="fig|416269.6.peg.20"/>
<dbReference type="eggNOG" id="COG0707">
    <property type="taxonomic scope" value="Bacteria"/>
</dbReference>
<dbReference type="HOGENOM" id="CLU_037404_2_0_6"/>
<dbReference type="UniPathway" id="UPA00219"/>
<dbReference type="Proteomes" id="UP000001432">
    <property type="component" value="Chromosome"/>
</dbReference>
<dbReference type="GO" id="GO:0005886">
    <property type="term" value="C:plasma membrane"/>
    <property type="evidence" value="ECO:0007669"/>
    <property type="project" value="UniProtKB-SubCell"/>
</dbReference>
<dbReference type="GO" id="GO:0051991">
    <property type="term" value="F:UDP-N-acetyl-D-glucosamine:N-acetylmuramoyl-L-alanyl-D-glutamyl-meso-2,6-diaminopimelyl-D-alanyl-D-alanine-diphosphoundecaprenol 4-beta-N-acetylglucosaminlytransferase activity"/>
    <property type="evidence" value="ECO:0007669"/>
    <property type="project" value="RHEA"/>
</dbReference>
<dbReference type="GO" id="GO:0050511">
    <property type="term" value="F:undecaprenyldiphospho-muramoylpentapeptide beta-N-acetylglucosaminyltransferase activity"/>
    <property type="evidence" value="ECO:0007669"/>
    <property type="project" value="UniProtKB-UniRule"/>
</dbReference>
<dbReference type="GO" id="GO:0005975">
    <property type="term" value="P:carbohydrate metabolic process"/>
    <property type="evidence" value="ECO:0007669"/>
    <property type="project" value="InterPro"/>
</dbReference>
<dbReference type="GO" id="GO:0051301">
    <property type="term" value="P:cell division"/>
    <property type="evidence" value="ECO:0007669"/>
    <property type="project" value="UniProtKB-KW"/>
</dbReference>
<dbReference type="GO" id="GO:0071555">
    <property type="term" value="P:cell wall organization"/>
    <property type="evidence" value="ECO:0007669"/>
    <property type="project" value="UniProtKB-KW"/>
</dbReference>
<dbReference type="GO" id="GO:0030259">
    <property type="term" value="P:lipid glycosylation"/>
    <property type="evidence" value="ECO:0007669"/>
    <property type="project" value="UniProtKB-UniRule"/>
</dbReference>
<dbReference type="GO" id="GO:0009252">
    <property type="term" value="P:peptidoglycan biosynthetic process"/>
    <property type="evidence" value="ECO:0007669"/>
    <property type="project" value="UniProtKB-UniRule"/>
</dbReference>
<dbReference type="GO" id="GO:0008360">
    <property type="term" value="P:regulation of cell shape"/>
    <property type="evidence" value="ECO:0007669"/>
    <property type="project" value="UniProtKB-KW"/>
</dbReference>
<dbReference type="CDD" id="cd03785">
    <property type="entry name" value="GT28_MurG"/>
    <property type="match status" value="1"/>
</dbReference>
<dbReference type="Gene3D" id="3.40.50.2000">
    <property type="entry name" value="Glycogen Phosphorylase B"/>
    <property type="match status" value="2"/>
</dbReference>
<dbReference type="HAMAP" id="MF_00033">
    <property type="entry name" value="MurG"/>
    <property type="match status" value="1"/>
</dbReference>
<dbReference type="InterPro" id="IPR006009">
    <property type="entry name" value="GlcNAc_MurG"/>
</dbReference>
<dbReference type="InterPro" id="IPR007235">
    <property type="entry name" value="Glyco_trans_28_C"/>
</dbReference>
<dbReference type="InterPro" id="IPR004276">
    <property type="entry name" value="GlycoTrans_28_N"/>
</dbReference>
<dbReference type="NCBIfam" id="TIGR01133">
    <property type="entry name" value="murG"/>
    <property type="match status" value="1"/>
</dbReference>
<dbReference type="PANTHER" id="PTHR21015:SF22">
    <property type="entry name" value="GLYCOSYLTRANSFERASE"/>
    <property type="match status" value="1"/>
</dbReference>
<dbReference type="PANTHER" id="PTHR21015">
    <property type="entry name" value="UDP-N-ACETYLGLUCOSAMINE--N-ACETYLMURAMYL-(PENTAPEPTIDE) PYROPHOSPHORYL-UNDECAPRENOL N-ACETYLGLUCOSAMINE TRANSFERASE 1"/>
    <property type="match status" value="1"/>
</dbReference>
<dbReference type="Pfam" id="PF04101">
    <property type="entry name" value="Glyco_tran_28_C"/>
    <property type="match status" value="1"/>
</dbReference>
<dbReference type="Pfam" id="PF03033">
    <property type="entry name" value="Glyco_transf_28"/>
    <property type="match status" value="1"/>
</dbReference>
<dbReference type="SUPFAM" id="SSF53756">
    <property type="entry name" value="UDP-Glycosyltransferase/glycogen phosphorylase"/>
    <property type="match status" value="1"/>
</dbReference>
<evidence type="ECO:0000255" key="1">
    <source>
        <dbReference type="HAMAP-Rule" id="MF_00033"/>
    </source>
</evidence>
<comment type="function">
    <text evidence="1">Cell wall formation. Catalyzes the transfer of a GlcNAc subunit on undecaprenyl-pyrophosphoryl-MurNAc-pentapeptide (lipid intermediate I) to form undecaprenyl-pyrophosphoryl-MurNAc-(pentapeptide)GlcNAc (lipid intermediate II).</text>
</comment>
<comment type="catalytic activity">
    <reaction evidence="1">
        <text>di-trans,octa-cis-undecaprenyl diphospho-N-acetyl-alpha-D-muramoyl-L-alanyl-D-glutamyl-meso-2,6-diaminopimeloyl-D-alanyl-D-alanine + UDP-N-acetyl-alpha-D-glucosamine = di-trans,octa-cis-undecaprenyl diphospho-[N-acetyl-alpha-D-glucosaminyl-(1-&gt;4)]-N-acetyl-alpha-D-muramoyl-L-alanyl-D-glutamyl-meso-2,6-diaminopimeloyl-D-alanyl-D-alanine + UDP + H(+)</text>
        <dbReference type="Rhea" id="RHEA:31227"/>
        <dbReference type="ChEBI" id="CHEBI:15378"/>
        <dbReference type="ChEBI" id="CHEBI:57705"/>
        <dbReference type="ChEBI" id="CHEBI:58223"/>
        <dbReference type="ChEBI" id="CHEBI:61387"/>
        <dbReference type="ChEBI" id="CHEBI:61388"/>
        <dbReference type="EC" id="2.4.1.227"/>
    </reaction>
</comment>
<comment type="pathway">
    <text evidence="1">Cell wall biogenesis; peptidoglycan biosynthesis.</text>
</comment>
<comment type="subcellular location">
    <subcellularLocation>
        <location evidence="1">Cell inner membrane</location>
        <topology evidence="1">Peripheral membrane protein</topology>
        <orientation evidence="1">Cytoplasmic side</orientation>
    </subcellularLocation>
</comment>
<comment type="similarity">
    <text evidence="1">Belongs to the glycosyltransferase 28 family. MurG subfamily.</text>
</comment>
<feature type="chain" id="PRO_1000002609" description="UDP-N-acetylglucosamine--N-acetylmuramyl-(pentapeptide) pyrophosphoryl-undecaprenol N-acetylglucosamine transferase">
    <location>
        <begin position="1"/>
        <end position="351"/>
    </location>
</feature>
<feature type="binding site" evidence="1">
    <location>
        <begin position="12"/>
        <end position="14"/>
    </location>
    <ligand>
        <name>UDP-N-acetyl-alpha-D-glucosamine</name>
        <dbReference type="ChEBI" id="CHEBI:57705"/>
    </ligand>
</feature>
<feature type="binding site" evidence="1">
    <location>
        <position position="124"/>
    </location>
    <ligand>
        <name>UDP-N-acetyl-alpha-D-glucosamine</name>
        <dbReference type="ChEBI" id="CHEBI:57705"/>
    </ligand>
</feature>
<feature type="binding site" evidence="1">
    <location>
        <position position="160"/>
    </location>
    <ligand>
        <name>UDP-N-acetyl-alpha-D-glucosamine</name>
        <dbReference type="ChEBI" id="CHEBI:57705"/>
    </ligand>
</feature>
<feature type="binding site" evidence="1">
    <location>
        <position position="188"/>
    </location>
    <ligand>
        <name>UDP-N-acetyl-alpha-D-glucosamine</name>
        <dbReference type="ChEBI" id="CHEBI:57705"/>
    </ligand>
</feature>
<feature type="binding site" evidence="1">
    <location>
        <position position="239"/>
    </location>
    <ligand>
        <name>UDP-N-acetyl-alpha-D-glucosamine</name>
        <dbReference type="ChEBI" id="CHEBI:57705"/>
    </ligand>
</feature>
<feature type="binding site" evidence="1">
    <location>
        <begin position="258"/>
        <end position="263"/>
    </location>
    <ligand>
        <name>UDP-N-acetyl-alpha-D-glucosamine</name>
        <dbReference type="ChEBI" id="CHEBI:57705"/>
    </ligand>
</feature>
<feature type="binding site" evidence="1">
    <location>
        <position position="283"/>
    </location>
    <ligand>
        <name>UDP-N-acetyl-alpha-D-glucosamine</name>
        <dbReference type="ChEBI" id="CHEBI:57705"/>
    </ligand>
</feature>
<protein>
    <recommendedName>
        <fullName evidence="1">UDP-N-acetylglucosamine--N-acetylmuramyl-(pentapeptide) pyrophosphoryl-undecaprenol N-acetylglucosamine transferase</fullName>
        <ecNumber evidence="1">2.4.1.227</ecNumber>
    </recommendedName>
    <alternativeName>
        <fullName evidence="1">Undecaprenyl-PP-MurNAc-pentapeptide-UDPGlcNAc GlcNAc transferase</fullName>
    </alternativeName>
</protein>
<organism>
    <name type="scientific">Actinobacillus pleuropneumoniae serotype 5b (strain L20)</name>
    <dbReference type="NCBI Taxonomy" id="416269"/>
    <lineage>
        <taxon>Bacteria</taxon>
        <taxon>Pseudomonadati</taxon>
        <taxon>Pseudomonadota</taxon>
        <taxon>Gammaproteobacteria</taxon>
        <taxon>Pasteurellales</taxon>
        <taxon>Pasteurellaceae</taxon>
        <taxon>Actinobacillus</taxon>
    </lineage>
</organism>
<gene>
    <name evidence="1" type="primary">murG</name>
    <name type="ordered locus">APL_0018</name>
</gene>
<accession>A3MY90</accession>
<name>MURG_ACTP2</name>
<proteinExistence type="inferred from homology"/>
<sequence>MAKKLLVMAGGTGGHVFPAIAVARELQKQGWEIRWLGTKDRMEADLVPKHGIPIEFIQISGLKGKGIGALLKAPFAIFKAVMQARKIIKNYQPDAVLGMGGYVSGPGGIAAKLCGVPVILHEQNAVAGLTNVWLSKIARRVLQAFPTAFPNAEVVGNPVREDLAQLEAPEIRFAERGYPINILVMGGSQGARVINQTVPEVAKQLGNNVFISHQVGKGNLGGVEEIYQATGNGIAAEFIDDMAQAYSWADLVICRSGALTVCEIAAAGLPAIFVPYQHKDRQQYLNATYLADGGAAIIIEQQDFTPQTLLNVLQPLIADRRKLTEMAVKARAKATPTAAQRVAEVIIEQAK</sequence>
<reference key="1">
    <citation type="journal article" date="2008" name="J. Bacteriol.">
        <title>The complete genome sequence of Actinobacillus pleuropneumoniae L20 (serotype 5b).</title>
        <authorList>
            <person name="Foote S.J."/>
            <person name="Bosse J.T."/>
            <person name="Bouevitch A.B."/>
            <person name="Langford P.R."/>
            <person name="Young N.M."/>
            <person name="Nash J.H.E."/>
        </authorList>
    </citation>
    <scope>NUCLEOTIDE SEQUENCE [LARGE SCALE GENOMIC DNA]</scope>
    <source>
        <strain>L20</strain>
    </source>
</reference>
<keyword id="KW-0131">Cell cycle</keyword>
<keyword id="KW-0132">Cell division</keyword>
<keyword id="KW-0997">Cell inner membrane</keyword>
<keyword id="KW-1003">Cell membrane</keyword>
<keyword id="KW-0133">Cell shape</keyword>
<keyword id="KW-0961">Cell wall biogenesis/degradation</keyword>
<keyword id="KW-0328">Glycosyltransferase</keyword>
<keyword id="KW-0472">Membrane</keyword>
<keyword id="KW-0573">Peptidoglycan synthesis</keyword>
<keyword id="KW-1185">Reference proteome</keyword>
<keyword id="KW-0808">Transferase</keyword>